<evidence type="ECO:0000250" key="1"/>
<evidence type="ECO:0000250" key="2">
    <source>
        <dbReference type="UniProtKB" id="P04746"/>
    </source>
</evidence>
<evidence type="ECO:0000269" key="3">
    <source>
    </source>
</evidence>
<evidence type="ECO:0000303" key="4">
    <source>
    </source>
</evidence>
<evidence type="ECO:0000305" key="5"/>
<evidence type="ECO:0000312" key="6">
    <source>
        <dbReference type="MGI" id="MGI:88020"/>
    </source>
</evidence>
<evidence type="ECO:0007744" key="7">
    <source>
    </source>
</evidence>
<gene>
    <name evidence="6" type="primary">Amy2a5</name>
    <name evidence="6" type="synonym">Amy2</name>
    <name evidence="4" type="synonym">Amy2a</name>
</gene>
<comment type="catalytic activity">
    <reaction evidence="2">
        <text>Endohydrolysis of (1-&gt;4)-alpha-D-glucosidic linkages in polysaccharides containing three or more (1-&gt;4)-alpha-linked D-glucose units.</text>
        <dbReference type="EC" id="3.2.1.1"/>
    </reaction>
</comment>
<comment type="cofactor">
    <cofactor evidence="2">
        <name>Ca(2+)</name>
        <dbReference type="ChEBI" id="CHEBI:29108"/>
    </cofactor>
    <text evidence="2">Binds 1 Ca(2+) ion per subunit.</text>
</comment>
<comment type="cofactor">
    <cofactor evidence="2">
        <name>chloride</name>
        <dbReference type="ChEBI" id="CHEBI:17996"/>
    </cofactor>
    <text evidence="2">Binds 1 Cl(-) ion per subunit.</text>
</comment>
<comment type="subunit">
    <text evidence="1">Monomer.</text>
</comment>
<comment type="subcellular location">
    <subcellularLocation>
        <location>Secreted</location>
        <location>Extracellular space</location>
    </subcellularLocation>
</comment>
<comment type="similarity">
    <text evidence="5">Belongs to the glycosyl hydrolase 13 family.</text>
</comment>
<protein>
    <recommendedName>
        <fullName evidence="6">Pancreatic alpha-amylase 2a5</fullName>
        <shortName>PA</shortName>
        <ecNumber evidence="2">3.2.1.1</ecNumber>
    </recommendedName>
    <alternativeName>
        <fullName>1,4-alpha-D-glucan glucanohydrolase</fullName>
    </alternativeName>
</protein>
<proteinExistence type="evidence at protein level"/>
<feature type="signal peptide" evidence="3">
    <location>
        <begin position="1"/>
        <end position="15"/>
    </location>
</feature>
<feature type="chain" id="PRO_0000001398" description="Pancreatic alpha-amylase 2a5">
    <location>
        <begin position="16"/>
        <end position="508"/>
    </location>
</feature>
<feature type="active site" description="Nucleophile" evidence="2">
    <location>
        <position position="209"/>
    </location>
</feature>
<feature type="active site" description="Proton donor" evidence="2">
    <location>
        <position position="245"/>
    </location>
</feature>
<feature type="binding site" evidence="2">
    <location>
        <position position="115"/>
    </location>
    <ligand>
        <name>Ca(2+)</name>
        <dbReference type="ChEBI" id="CHEBI:29108"/>
    </ligand>
</feature>
<feature type="binding site" evidence="2">
    <location>
        <position position="170"/>
    </location>
    <ligand>
        <name>Ca(2+)</name>
        <dbReference type="ChEBI" id="CHEBI:29108"/>
    </ligand>
</feature>
<feature type="binding site" evidence="2">
    <location>
        <position position="179"/>
    </location>
    <ligand>
        <name>Ca(2+)</name>
        <dbReference type="ChEBI" id="CHEBI:29108"/>
    </ligand>
</feature>
<feature type="binding site" evidence="2">
    <location>
        <position position="207"/>
    </location>
    <ligand>
        <name>chloride</name>
        <dbReference type="ChEBI" id="CHEBI:17996"/>
    </ligand>
</feature>
<feature type="binding site" evidence="2">
    <location>
        <position position="213"/>
    </location>
    <ligand>
        <name>Ca(2+)</name>
        <dbReference type="ChEBI" id="CHEBI:29108"/>
    </ligand>
</feature>
<feature type="binding site" evidence="2">
    <location>
        <position position="310"/>
    </location>
    <ligand>
        <name>chloride</name>
        <dbReference type="ChEBI" id="CHEBI:17996"/>
    </ligand>
</feature>
<feature type="binding site" evidence="2">
    <location>
        <position position="349"/>
    </location>
    <ligand>
        <name>chloride</name>
        <dbReference type="ChEBI" id="CHEBI:17996"/>
    </ligand>
</feature>
<feature type="site" description="Transition state stabilizer" evidence="2">
    <location>
        <position position="312"/>
    </location>
</feature>
<feature type="modified residue" description="Pyrrolidone carboxylic acid" evidence="3">
    <location>
        <position position="16"/>
    </location>
</feature>
<feature type="disulfide bond" evidence="2">
    <location>
        <begin position="43"/>
        <end position="101"/>
    </location>
</feature>
<feature type="disulfide bond" evidence="2">
    <location>
        <begin position="85"/>
        <end position="130"/>
    </location>
</feature>
<feature type="disulfide bond" evidence="2">
    <location>
        <begin position="156"/>
        <end position="172"/>
    </location>
</feature>
<feature type="disulfide bond" evidence="2">
    <location>
        <begin position="390"/>
        <end position="396"/>
    </location>
</feature>
<feature type="disulfide bond" evidence="2">
    <location>
        <begin position="462"/>
        <end position="474"/>
    </location>
</feature>
<feature type="sequence variant" description="In A1, B(C) and AMY-2.2Y.">
    <original>V</original>
    <variation>I</variation>
    <location>
        <position position="64"/>
    </location>
</feature>
<feature type="sequence variant" description="In AMY-2.2Y.">
    <original>V</original>
    <variation>I</variation>
    <location>
        <position position="66"/>
    </location>
</feature>
<feature type="sequence variant" description="In A1, B(A) and B(C).">
    <original>A</original>
    <variation>S</variation>
    <location>
        <position position="120"/>
    </location>
</feature>
<feature type="sequence variant" description="In A1, B(A) and B(C); requires 2 nucleotide substitutions.">
    <original>D</original>
    <variation>S</variation>
    <location>
        <position position="161"/>
    </location>
</feature>
<feature type="sequence variant" description="In A1 and B(C).">
    <original>L</original>
    <variation>V</variation>
    <location>
        <position position="174"/>
    </location>
</feature>
<feature type="sequence variant" description="In B(A).">
    <original>T</original>
    <variation>S</variation>
    <location>
        <position position="175"/>
    </location>
</feature>
<feature type="sequence variant" description="In A1 and B(C).">
    <original>I</original>
    <variation>V</variation>
    <location>
        <position position="254"/>
    </location>
</feature>
<feature type="sequence variant" description="In A1 and B(C).">
    <original>YGA</original>
    <variation>FGV</variation>
    <location>
        <begin position="270"/>
        <end position="272"/>
    </location>
</feature>
<feature type="sequence variant" description="In A1, B(A) and B(C)." evidence="7">
    <original>L</original>
    <variation>M</variation>
    <location>
        <position position="298"/>
    </location>
</feature>
<feature type="sequence variant" description="In B(A).">
    <original>S</original>
    <variation>A</variation>
    <location>
        <position position="322"/>
    </location>
</feature>
<feature type="sequence variant" description="In B1.">
    <original>S</original>
    <variation>A</variation>
    <location>
        <position position="419"/>
    </location>
</feature>
<feature type="sequence variant" description="In B(C).">
    <original>A</original>
    <variation>E</variation>
    <location>
        <position position="450"/>
    </location>
</feature>
<feature type="sequence conflict" description="In Ref. 5; AAA37228." evidence="5" ref="5">
    <original>S</original>
    <variation>T</variation>
    <location>
        <position position="70"/>
    </location>
</feature>
<feature type="sequence conflict" description="In Ref. 5; AAA37228." evidence="5" ref="5">
    <original>C</original>
    <variation>S</variation>
    <location>
        <position position="85"/>
    </location>
</feature>
<feature type="sequence conflict" description="In Ref. 1; CAA24098 and 2; CAA26413/CAA26414/CAA26415." evidence="5" ref="1 2">
    <original>G</original>
    <variation>R</variation>
    <location>
        <position position="217"/>
    </location>
</feature>
<name>AM2A5_MOUSE</name>
<reference key="1">
    <citation type="journal article" date="1980" name="Cell">
        <title>Tissue-specific expression of mouse-alpha-amylase genes: nucleotide sequence of isoenzyme mRNAs from pancreas and salivary gland.</title>
        <authorList>
            <person name="Hagenbuechle O."/>
            <person name="Bovey R."/>
            <person name="Young R.A."/>
        </authorList>
    </citation>
    <scope>NUCLEOTIDE SEQUENCE [GENOMIC DNA]</scope>
</reference>
<reference key="2">
    <citation type="journal article" date="1984" name="EMBO J.">
        <title>Multiple non-allelic genes encoding pancreatic alpha-amylase of mouse are expressed in a strain-specific fashion.</title>
        <authorList>
            <person name="Tosi M."/>
            <person name="Bovey R."/>
            <person name="Astolfi S."/>
            <person name="Bodary S."/>
            <person name="Meisler M.H."/>
            <person name="Wellauer P.K."/>
        </authorList>
    </citation>
    <scope>NUCLEOTIDE SEQUENCE [MRNA] (ISOZYMES A1; B(A) AND B(C))</scope>
    <source>
        <strain>CE/J</strain>
    </source>
</reference>
<reference key="3">
    <citation type="journal article" date="2005" name="Science">
        <title>The transcriptional landscape of the mammalian genome.</title>
        <authorList>
            <person name="Carninci P."/>
            <person name="Kasukawa T."/>
            <person name="Katayama S."/>
            <person name="Gough J."/>
            <person name="Frith M.C."/>
            <person name="Maeda N."/>
            <person name="Oyama R."/>
            <person name="Ravasi T."/>
            <person name="Lenhard B."/>
            <person name="Wells C."/>
            <person name="Kodzius R."/>
            <person name="Shimokawa K."/>
            <person name="Bajic V.B."/>
            <person name="Brenner S.E."/>
            <person name="Batalov S."/>
            <person name="Forrest A.R."/>
            <person name="Zavolan M."/>
            <person name="Davis M.J."/>
            <person name="Wilming L.G."/>
            <person name="Aidinis V."/>
            <person name="Allen J.E."/>
            <person name="Ambesi-Impiombato A."/>
            <person name="Apweiler R."/>
            <person name="Aturaliya R.N."/>
            <person name="Bailey T.L."/>
            <person name="Bansal M."/>
            <person name="Baxter L."/>
            <person name="Beisel K.W."/>
            <person name="Bersano T."/>
            <person name="Bono H."/>
            <person name="Chalk A.M."/>
            <person name="Chiu K.P."/>
            <person name="Choudhary V."/>
            <person name="Christoffels A."/>
            <person name="Clutterbuck D.R."/>
            <person name="Crowe M.L."/>
            <person name="Dalla E."/>
            <person name="Dalrymple B.P."/>
            <person name="de Bono B."/>
            <person name="Della Gatta G."/>
            <person name="di Bernardo D."/>
            <person name="Down T."/>
            <person name="Engstrom P."/>
            <person name="Fagiolini M."/>
            <person name="Faulkner G."/>
            <person name="Fletcher C.F."/>
            <person name="Fukushima T."/>
            <person name="Furuno M."/>
            <person name="Futaki S."/>
            <person name="Gariboldi M."/>
            <person name="Georgii-Hemming P."/>
            <person name="Gingeras T.R."/>
            <person name="Gojobori T."/>
            <person name="Green R.E."/>
            <person name="Gustincich S."/>
            <person name="Harbers M."/>
            <person name="Hayashi Y."/>
            <person name="Hensch T.K."/>
            <person name="Hirokawa N."/>
            <person name="Hill D."/>
            <person name="Huminiecki L."/>
            <person name="Iacono M."/>
            <person name="Ikeo K."/>
            <person name="Iwama A."/>
            <person name="Ishikawa T."/>
            <person name="Jakt M."/>
            <person name="Kanapin A."/>
            <person name="Katoh M."/>
            <person name="Kawasawa Y."/>
            <person name="Kelso J."/>
            <person name="Kitamura H."/>
            <person name="Kitano H."/>
            <person name="Kollias G."/>
            <person name="Krishnan S.P."/>
            <person name="Kruger A."/>
            <person name="Kummerfeld S.K."/>
            <person name="Kurochkin I.V."/>
            <person name="Lareau L.F."/>
            <person name="Lazarevic D."/>
            <person name="Lipovich L."/>
            <person name="Liu J."/>
            <person name="Liuni S."/>
            <person name="McWilliam S."/>
            <person name="Madan Babu M."/>
            <person name="Madera M."/>
            <person name="Marchionni L."/>
            <person name="Matsuda H."/>
            <person name="Matsuzawa S."/>
            <person name="Miki H."/>
            <person name="Mignone F."/>
            <person name="Miyake S."/>
            <person name="Morris K."/>
            <person name="Mottagui-Tabar S."/>
            <person name="Mulder N."/>
            <person name="Nakano N."/>
            <person name="Nakauchi H."/>
            <person name="Ng P."/>
            <person name="Nilsson R."/>
            <person name="Nishiguchi S."/>
            <person name="Nishikawa S."/>
            <person name="Nori F."/>
            <person name="Ohara O."/>
            <person name="Okazaki Y."/>
            <person name="Orlando V."/>
            <person name="Pang K.C."/>
            <person name="Pavan W.J."/>
            <person name="Pavesi G."/>
            <person name="Pesole G."/>
            <person name="Petrovsky N."/>
            <person name="Piazza S."/>
            <person name="Reed J."/>
            <person name="Reid J.F."/>
            <person name="Ring B.Z."/>
            <person name="Ringwald M."/>
            <person name="Rost B."/>
            <person name="Ruan Y."/>
            <person name="Salzberg S.L."/>
            <person name="Sandelin A."/>
            <person name="Schneider C."/>
            <person name="Schoenbach C."/>
            <person name="Sekiguchi K."/>
            <person name="Semple C.A."/>
            <person name="Seno S."/>
            <person name="Sessa L."/>
            <person name="Sheng Y."/>
            <person name="Shibata Y."/>
            <person name="Shimada H."/>
            <person name="Shimada K."/>
            <person name="Silva D."/>
            <person name="Sinclair B."/>
            <person name="Sperling S."/>
            <person name="Stupka E."/>
            <person name="Sugiura K."/>
            <person name="Sultana R."/>
            <person name="Takenaka Y."/>
            <person name="Taki K."/>
            <person name="Tammoja K."/>
            <person name="Tan S.L."/>
            <person name="Tang S."/>
            <person name="Taylor M.S."/>
            <person name="Tegner J."/>
            <person name="Teichmann S.A."/>
            <person name="Ueda H.R."/>
            <person name="van Nimwegen E."/>
            <person name="Verardo R."/>
            <person name="Wei C.L."/>
            <person name="Yagi K."/>
            <person name="Yamanishi H."/>
            <person name="Zabarovsky E."/>
            <person name="Zhu S."/>
            <person name="Zimmer A."/>
            <person name="Hide W."/>
            <person name="Bult C."/>
            <person name="Grimmond S.M."/>
            <person name="Teasdale R.D."/>
            <person name="Liu E.T."/>
            <person name="Brusic V."/>
            <person name="Quackenbush J."/>
            <person name="Wahlestedt C."/>
            <person name="Mattick J.S."/>
            <person name="Hume D.A."/>
            <person name="Kai C."/>
            <person name="Sasaki D."/>
            <person name="Tomaru Y."/>
            <person name="Fukuda S."/>
            <person name="Kanamori-Katayama M."/>
            <person name="Suzuki M."/>
            <person name="Aoki J."/>
            <person name="Arakawa T."/>
            <person name="Iida J."/>
            <person name="Imamura K."/>
            <person name="Itoh M."/>
            <person name="Kato T."/>
            <person name="Kawaji H."/>
            <person name="Kawagashira N."/>
            <person name="Kawashima T."/>
            <person name="Kojima M."/>
            <person name="Kondo S."/>
            <person name="Konno H."/>
            <person name="Nakano K."/>
            <person name="Ninomiya N."/>
            <person name="Nishio T."/>
            <person name="Okada M."/>
            <person name="Plessy C."/>
            <person name="Shibata K."/>
            <person name="Shiraki T."/>
            <person name="Suzuki S."/>
            <person name="Tagami M."/>
            <person name="Waki K."/>
            <person name="Watahiki A."/>
            <person name="Okamura-Oho Y."/>
            <person name="Suzuki H."/>
            <person name="Kawai J."/>
            <person name="Hayashizaki Y."/>
        </authorList>
    </citation>
    <scope>NUCLEOTIDE SEQUENCE [LARGE SCALE MRNA]</scope>
    <source>
        <strain>C57BL/6J</strain>
        <tissue>Ovary</tissue>
        <tissue>Uterus</tissue>
    </source>
</reference>
<reference key="4">
    <citation type="journal article" date="2004" name="Genome Res.">
        <title>The status, quality, and expansion of the NIH full-length cDNA project: the Mammalian Gene Collection (MGC).</title>
        <authorList>
            <consortium name="The MGC Project Team"/>
        </authorList>
    </citation>
    <scope>NUCLEOTIDE SEQUENCE [LARGE SCALE MRNA]</scope>
    <source>
        <tissue>Pancreas</tissue>
    </source>
</reference>
<reference key="5">
    <citation type="journal article" date="1982" name="J. Mol. Biol.">
        <title>The mouse alpha-amylase multigene family. Sequence organization of members expressed in the pancreas, salivary gland and liver.</title>
        <authorList>
            <person name="Schibler U."/>
            <person name="Pittet A.-C."/>
            <person name="Young R.A."/>
            <person name="Hagenbuechle O."/>
            <person name="Tosi M."/>
            <person name="Gellman S."/>
            <person name="Wellauer P.K."/>
        </authorList>
    </citation>
    <scope>NUCLEOTIDE SEQUENCE [GENOMIC DNA] OF 1-94 AND 267-290</scope>
    <source>
        <strain>A/J</strain>
    </source>
</reference>
<reference key="6">
    <citation type="journal article" date="1985" name="J. Mol. Biol.">
        <title>Members of the Amy-2 alpha-amylase gene family of mouse strain CE/J contain duplicated 5' termini.</title>
        <authorList>
            <person name="Bodary S."/>
            <person name="Grossi G."/>
            <person name="Hagenbuechle O."/>
            <person name="Wellauer P.K."/>
        </authorList>
    </citation>
    <scope>NUCLEOTIDE SEQUENCE [GENOMIC DNA] OF 1-94</scope>
</reference>
<reference key="7">
    <citation type="journal article" date="1987" name="Mol. Cell. Biol.">
        <title>Tissue-specific and insulin-dependent expression of a pancreatic amylase gene in transgenic mice.</title>
        <authorList>
            <person name="Osborn L."/>
            <person name="Rosenberg M.P."/>
            <person name="Keller S.A."/>
            <person name="Meisler M.H."/>
        </authorList>
    </citation>
    <scope>NUCLEOTIDE SEQUENCE [GENOMIC DNA] OF 1-94 (ISOZYMES AMY-2.1Y AND AMY-2.2Y)</scope>
</reference>
<reference key="8">
    <citation type="journal article" date="1985" name="J. Biol. Chem.">
        <title>Evolution of the amylase multigene family. YBR/Ki mice express a pancreatic amylase gene which is silent in other strains.</title>
        <authorList>
            <person name="Gumucio D.L."/>
            <person name="Wiebauer K."/>
            <person name="Dranginis A."/>
            <person name="Samuelson L.C."/>
            <person name="Treisman L.O."/>
            <person name="Caldwell R.M."/>
            <person name="Antonucci T.K."/>
            <person name="Meisler M.H."/>
        </authorList>
    </citation>
    <scope>NUCLEOTIDE SEQUENCE [GENOMIC DNA / MRNA] OF 267-289 AND 388-470 (ISOZYMES A1 AND B1)</scope>
    <source>
        <strain>YRB/KI</strain>
    </source>
</reference>
<reference key="9">
    <citation type="journal article" date="1981" name="FEBS Lett.">
        <title>Characterization of the amino termini of mouse salivary and pancreatic amylases.</title>
        <authorList>
            <person name="Karn R.C."/>
            <person name="Petersen T.E."/>
            <person name="Hjorth J.P."/>
            <person name="Nieles J.T."/>
            <person name="Roepstorff P."/>
        </authorList>
    </citation>
    <scope>SIGNAL SEQUENCE CLEAVAGE SITE</scope>
    <scope>PYROGLUTAMATE FORMATION AT GLN-16</scope>
</reference>
<reference key="10">
    <citation type="journal article" date="1982" name="Genetics">
        <title>Two distinct pancreatic amylase genes are active in YBR mice.</title>
        <authorList>
            <person name="Strahler J.R."/>
            <person name="Meisler M."/>
        </authorList>
    </citation>
    <scope>PROTEIN SEQUENCE OF 407-458</scope>
    <source>
        <strain>YBR</strain>
    </source>
</reference>
<reference key="11">
    <citation type="journal article" date="2010" name="Cell">
        <title>A tissue-specific atlas of mouse protein phosphorylation and expression.</title>
        <authorList>
            <person name="Huttlin E.L."/>
            <person name="Jedrychowski M.P."/>
            <person name="Elias J.E."/>
            <person name="Goswami T."/>
            <person name="Rad R."/>
            <person name="Beausoleil S.A."/>
            <person name="Villen J."/>
            <person name="Haas W."/>
            <person name="Sowa M.E."/>
            <person name="Gygi S.P."/>
        </authorList>
    </citation>
    <scope>VARIANT [LARGE SCALE ANALYSIS] MET-298</scope>
    <scope>IDENTIFICATION BY MASS SPECTROMETRY [LARGE SCALE ANALYSIS]</scope>
    <source>
        <tissue>Liver</tissue>
        <tissue>Lung</tissue>
        <tissue>Pancreas</tissue>
        <tissue>Spleen</tissue>
    </source>
</reference>
<keyword id="KW-0106">Calcium</keyword>
<keyword id="KW-0119">Carbohydrate metabolism</keyword>
<keyword id="KW-0868">Chloride</keyword>
<keyword id="KW-0903">Direct protein sequencing</keyword>
<keyword id="KW-1015">Disulfide bond</keyword>
<keyword id="KW-0326">Glycosidase</keyword>
<keyword id="KW-0378">Hydrolase</keyword>
<keyword id="KW-0479">Metal-binding</keyword>
<keyword id="KW-0873">Pyrrolidone carboxylic acid</keyword>
<keyword id="KW-1185">Reference proteome</keyword>
<keyword id="KW-0964">Secreted</keyword>
<keyword id="KW-0732">Signal</keyword>
<accession>P00688</accession>
<accession>Q4VBW6</accession>
<accession>Q61295</accession>
<accession>Q61296</accession>
<accession>Q64301</accession>
<sequence>MKFVLLLSLIGFCWAQYDPHTSDGRTAIVHLFEWRWVDIAKECERYLAPKGFGGVQVSPPNENVVVHNPSRPWWERYQPISYKICTRSGNEDEFRDMVTRCNNVGVRIYVDAVINHMCGAGNPAGTSSTCGSYLNPNNREFPAVPYSAWDFNDNKCNGEIDNYNDAYQVRNCRLTGLLDLALEKDYVRTKVADYMNHLIDIGVAGFRLDAAKHMWPGDIKAVLDKLHNLNTKWFSQGSRPFIFQEVIDLGGEAIKGSEYFGNGRVTEFKYGAKLGTVIRKWNGEKMSYLKNWGEGWGLVPSDRALVFVDNHDNQRGHGAGGSSILTFWDARMYKMAVGFMLAHPYGFTRVMSSYRWNRNFQNGKDQNDWIGPPNNNGVTKEVTINADTTCGNDWVCEHRWRQIRNMVAFRNVVNGQPFSNWWDNNSNQVAFSRGNRGFIVFNNDDWALSATLQTGLPAGTYCDVISGDKVDGNCTGLRVNVGSDGKAHFSISNSAEDPFIAIHADSKL</sequence>
<organism>
    <name type="scientific">Mus musculus</name>
    <name type="common">Mouse</name>
    <dbReference type="NCBI Taxonomy" id="10090"/>
    <lineage>
        <taxon>Eukaryota</taxon>
        <taxon>Metazoa</taxon>
        <taxon>Chordata</taxon>
        <taxon>Craniata</taxon>
        <taxon>Vertebrata</taxon>
        <taxon>Euteleostomi</taxon>
        <taxon>Mammalia</taxon>
        <taxon>Eutheria</taxon>
        <taxon>Euarchontoglires</taxon>
        <taxon>Glires</taxon>
        <taxon>Rodentia</taxon>
        <taxon>Myomorpha</taxon>
        <taxon>Muroidea</taxon>
        <taxon>Muridae</taxon>
        <taxon>Murinae</taxon>
        <taxon>Mus</taxon>
        <taxon>Mus</taxon>
    </lineage>
</organism>
<dbReference type="EC" id="3.2.1.1" evidence="2"/>
<dbReference type="EMBL" id="V00718">
    <property type="protein sequence ID" value="CAA24098.1"/>
    <property type="molecule type" value="mRNA"/>
</dbReference>
<dbReference type="EMBL" id="X02576">
    <property type="protein sequence ID" value="CAA26413.1"/>
    <property type="molecule type" value="mRNA"/>
</dbReference>
<dbReference type="EMBL" id="X02577">
    <property type="protein sequence ID" value="CAA26414.1"/>
    <property type="molecule type" value="mRNA"/>
</dbReference>
<dbReference type="EMBL" id="X02578">
    <property type="protein sequence ID" value="CAA26415.1"/>
    <property type="molecule type" value="mRNA"/>
</dbReference>
<dbReference type="EMBL" id="AK133526">
    <property type="protein sequence ID" value="BAE21706.1"/>
    <property type="molecule type" value="mRNA"/>
</dbReference>
<dbReference type="EMBL" id="BC094924">
    <property type="protein sequence ID" value="AAH94924.1"/>
    <property type="molecule type" value="mRNA"/>
</dbReference>
<dbReference type="EMBL" id="BC100579">
    <property type="protein sequence ID" value="AAI00580.1"/>
    <property type="molecule type" value="mRNA"/>
</dbReference>
<dbReference type="EMBL" id="J00357">
    <property type="protein sequence ID" value="AAA37228.1"/>
    <property type="molecule type" value="Genomic_DNA"/>
</dbReference>
<dbReference type="EMBL" id="J00358">
    <property type="protein sequence ID" value="AAA37229.1"/>
    <property type="molecule type" value="Genomic_DNA"/>
</dbReference>
<dbReference type="EMBL" id="J00361">
    <property type="protein sequence ID" value="AAA37233.1"/>
    <property type="molecule type" value="Genomic_DNA"/>
</dbReference>
<dbReference type="EMBL" id="X02343">
    <property type="protein sequence ID" value="CAA26202.1"/>
    <property type="molecule type" value="Genomic_DNA"/>
</dbReference>
<dbReference type="EMBL" id="M16540">
    <property type="protein sequence ID" value="AAA37223.1"/>
    <property type="molecule type" value="Genomic_DNA"/>
</dbReference>
<dbReference type="EMBL" id="M15965">
    <property type="protein sequence ID" value="AAA37226.1"/>
    <property type="molecule type" value="Genomic_DNA"/>
</dbReference>
<dbReference type="EMBL" id="M11895">
    <property type="protein sequence ID" value="AAA37224.1"/>
    <property type="molecule type" value="mRNA"/>
</dbReference>
<dbReference type="EMBL" id="M11896">
    <property type="protein sequence ID" value="AAA37227.1"/>
    <property type="molecule type" value="mRNA"/>
</dbReference>
<dbReference type="EMBL" id="M11891">
    <property type="protein sequence ID" value="AAA37222.1"/>
    <property type="molecule type" value="Genomic_DNA"/>
</dbReference>
<dbReference type="CCDS" id="CCDS17775.1"/>
<dbReference type="PIR" id="A90995">
    <property type="entry name" value="ALMSP1"/>
</dbReference>
<dbReference type="PIR" id="B90798">
    <property type="entry name" value="ALMSP"/>
</dbReference>
<dbReference type="PIR" id="B90995">
    <property type="entry name" value="ALMSPC"/>
</dbReference>
<dbReference type="PIR" id="C90995">
    <property type="entry name" value="ALMSPA"/>
</dbReference>
<dbReference type="PIR" id="I49493">
    <property type="entry name" value="I49493"/>
</dbReference>
<dbReference type="PIR" id="I49494">
    <property type="entry name" value="I49494"/>
</dbReference>
<dbReference type="RefSeq" id="NP_001036176.1">
    <property type="nucleotide sequence ID" value="NM_001042711.2"/>
</dbReference>
<dbReference type="RefSeq" id="NP_001153622.1">
    <property type="nucleotide sequence ID" value="NM_001160150.1"/>
</dbReference>
<dbReference type="RefSeq" id="NP_001153623.1">
    <property type="nucleotide sequence ID" value="NM_001160151.1"/>
</dbReference>
<dbReference type="RefSeq" id="NP_001153624.1">
    <property type="nucleotide sequence ID" value="NM_001160152.1"/>
</dbReference>
<dbReference type="SMR" id="P00688"/>
<dbReference type="FunCoup" id="P00688">
    <property type="interactions" value="177"/>
</dbReference>
<dbReference type="STRING" id="10090.ENSMUSP00000096264"/>
<dbReference type="CAZy" id="GH13">
    <property type="family name" value="Glycoside Hydrolase Family 13"/>
</dbReference>
<dbReference type="iPTMnet" id="P00688"/>
<dbReference type="PhosphoSitePlus" id="P00688"/>
<dbReference type="CPTAC" id="non-CPTAC-3891"/>
<dbReference type="jPOST" id="P00688"/>
<dbReference type="PaxDb" id="10090-ENSMUSP00000096264"/>
<dbReference type="PeptideAtlas" id="P00688"/>
<dbReference type="ProteomicsDB" id="282086"/>
<dbReference type="Pumba" id="P00688"/>
<dbReference type="DNASU" id="109959"/>
<dbReference type="Ensembl" id="ENSMUST00000098667.5">
    <property type="protein sequence ID" value="ENSMUSP00000096264.4"/>
    <property type="gene ID" value="ENSMUSG00000096569.3"/>
</dbReference>
<dbReference type="Ensembl" id="ENSMUST00000098673.5">
    <property type="protein sequence ID" value="ENSMUSP00000096270.4"/>
    <property type="gene ID" value="ENSMUSG00000074268.5"/>
</dbReference>
<dbReference type="Ensembl" id="ENSMUST00000179314.3">
    <property type="protein sequence ID" value="ENSMUSP00000136894.2"/>
    <property type="gene ID" value="ENSMUSG00000093931.3"/>
</dbReference>
<dbReference type="Ensembl" id="ENSMUST00000179568.3">
    <property type="protein sequence ID" value="ENSMUSP00000137025.2"/>
    <property type="gene ID" value="ENSMUSG00000096770.3"/>
</dbReference>
<dbReference type="GeneID" id="100043684"/>
<dbReference type="GeneID" id="100043686"/>
<dbReference type="GeneID" id="100043688"/>
<dbReference type="GeneID" id="109959"/>
<dbReference type="KEGG" id="mmu:100043684"/>
<dbReference type="KEGG" id="mmu:100043686"/>
<dbReference type="KEGG" id="mmu:100043688"/>
<dbReference type="KEGG" id="mmu:109959"/>
<dbReference type="UCSC" id="uc008rav.2">
    <property type="organism name" value="mouse"/>
</dbReference>
<dbReference type="AGR" id="MGI:88020"/>
<dbReference type="CTD" id="100043684"/>
<dbReference type="CTD" id="100043686"/>
<dbReference type="CTD" id="100043688"/>
<dbReference type="CTD" id="109959"/>
<dbReference type="MGI" id="MGI:88020">
    <property type="gene designation" value="Amy2a5"/>
</dbReference>
<dbReference type="VEuPathDB" id="HostDB:ENSMUSG00000074268"/>
<dbReference type="VEuPathDB" id="HostDB:ENSMUSG00000093931"/>
<dbReference type="VEuPathDB" id="HostDB:ENSMUSG00000096569"/>
<dbReference type="VEuPathDB" id="HostDB:ENSMUSG00000096770"/>
<dbReference type="eggNOG" id="KOG2212">
    <property type="taxonomic scope" value="Eukaryota"/>
</dbReference>
<dbReference type="GeneTree" id="ENSGT00940000163532"/>
<dbReference type="HOGENOM" id="CLU_013336_2_1_1"/>
<dbReference type="InParanoid" id="P00688"/>
<dbReference type="OMA" id="HPWWEVY"/>
<dbReference type="OrthoDB" id="550577at2759"/>
<dbReference type="PhylomeDB" id="P00688"/>
<dbReference type="TreeFam" id="TF312850"/>
<dbReference type="Reactome" id="R-MMU-189085">
    <property type="pathway name" value="Digestion of dietary carbohydrate"/>
</dbReference>
<dbReference type="BioGRID-ORCS" id="100043684">
    <property type="hits" value="4 hits in 38 CRISPR screens"/>
</dbReference>
<dbReference type="BioGRID-ORCS" id="100043686">
    <property type="hits" value="7 hits in 37 CRISPR screens"/>
</dbReference>
<dbReference type="BioGRID-ORCS" id="100043688">
    <property type="hits" value="3 hits in 40 CRISPR screens"/>
</dbReference>
<dbReference type="BioGRID-ORCS" id="109959">
    <property type="hits" value="4 hits in 38 CRISPR screens"/>
</dbReference>
<dbReference type="PRO" id="PR:P00688"/>
<dbReference type="Proteomes" id="UP000000589">
    <property type="component" value="Chromosome 3"/>
</dbReference>
<dbReference type="RNAct" id="P00688">
    <property type="molecule type" value="protein"/>
</dbReference>
<dbReference type="Bgee" id="ENSMUSG00000074268">
    <property type="expression patterns" value="Expressed in islet of Langerhans and 24 other cell types or tissues"/>
</dbReference>
<dbReference type="GO" id="GO:0005615">
    <property type="term" value="C:extracellular space"/>
    <property type="evidence" value="ECO:0000314"/>
    <property type="project" value="MGI"/>
</dbReference>
<dbReference type="GO" id="GO:0004556">
    <property type="term" value="F:alpha-amylase activity"/>
    <property type="evidence" value="ECO:0000250"/>
    <property type="project" value="UniProtKB"/>
</dbReference>
<dbReference type="GO" id="GO:0016160">
    <property type="term" value="F:amylase activity"/>
    <property type="evidence" value="ECO:0000314"/>
    <property type="project" value="MGI"/>
</dbReference>
<dbReference type="GO" id="GO:0005509">
    <property type="term" value="F:calcium ion binding"/>
    <property type="evidence" value="ECO:0000250"/>
    <property type="project" value="UniProtKB"/>
</dbReference>
<dbReference type="GO" id="GO:0031404">
    <property type="term" value="F:chloride ion binding"/>
    <property type="evidence" value="ECO:0000250"/>
    <property type="project" value="UniProtKB"/>
</dbReference>
<dbReference type="GO" id="GO:0016052">
    <property type="term" value="P:carbohydrate catabolic process"/>
    <property type="evidence" value="ECO:0000250"/>
    <property type="project" value="UniProtKB"/>
</dbReference>
<dbReference type="CDD" id="cd11317">
    <property type="entry name" value="AmyAc_bac_euk_AmyA"/>
    <property type="match status" value="1"/>
</dbReference>
<dbReference type="FunFam" id="2.60.40.1180:FF:000020">
    <property type="entry name" value="Pancreatic alpha-amylase"/>
    <property type="match status" value="1"/>
</dbReference>
<dbReference type="FunFam" id="3.20.20.80:FF:000056">
    <property type="entry name" value="Pancreatic alpha-amylase"/>
    <property type="match status" value="1"/>
</dbReference>
<dbReference type="Gene3D" id="3.20.20.80">
    <property type="entry name" value="Glycosidases"/>
    <property type="match status" value="1"/>
</dbReference>
<dbReference type="Gene3D" id="2.60.40.1180">
    <property type="entry name" value="Golgi alpha-mannosidase II"/>
    <property type="match status" value="1"/>
</dbReference>
<dbReference type="InterPro" id="IPR006048">
    <property type="entry name" value="A-amylase/branching_C"/>
</dbReference>
<dbReference type="InterPro" id="IPR031319">
    <property type="entry name" value="A-amylase_C"/>
</dbReference>
<dbReference type="InterPro" id="IPR006046">
    <property type="entry name" value="Alpha_amylase"/>
</dbReference>
<dbReference type="InterPro" id="IPR006047">
    <property type="entry name" value="Glyco_hydro_13_cat_dom"/>
</dbReference>
<dbReference type="InterPro" id="IPR013780">
    <property type="entry name" value="Glyco_hydro_b"/>
</dbReference>
<dbReference type="InterPro" id="IPR017853">
    <property type="entry name" value="Glycoside_hydrolase_SF"/>
</dbReference>
<dbReference type="PANTHER" id="PTHR43447">
    <property type="entry name" value="ALPHA-AMYLASE"/>
    <property type="match status" value="1"/>
</dbReference>
<dbReference type="Pfam" id="PF00128">
    <property type="entry name" value="Alpha-amylase"/>
    <property type="match status" value="1"/>
</dbReference>
<dbReference type="Pfam" id="PF02806">
    <property type="entry name" value="Alpha-amylase_C"/>
    <property type="match status" value="1"/>
</dbReference>
<dbReference type="PRINTS" id="PR00110">
    <property type="entry name" value="ALPHAAMYLASE"/>
</dbReference>
<dbReference type="SMART" id="SM00642">
    <property type="entry name" value="Aamy"/>
    <property type="match status" value="1"/>
</dbReference>
<dbReference type="SMART" id="SM00632">
    <property type="entry name" value="Aamy_C"/>
    <property type="match status" value="1"/>
</dbReference>
<dbReference type="SUPFAM" id="SSF51445">
    <property type="entry name" value="(Trans)glycosidases"/>
    <property type="match status" value="1"/>
</dbReference>
<dbReference type="SUPFAM" id="SSF51011">
    <property type="entry name" value="Glycosyl hydrolase domain"/>
    <property type="match status" value="1"/>
</dbReference>